<keyword id="KW-0963">Cytoplasm</keyword>
<keyword id="KW-0342">GTP-binding</keyword>
<keyword id="KW-0460">Magnesium</keyword>
<keyword id="KW-0479">Metal-binding</keyword>
<keyword id="KW-0547">Nucleotide-binding</keyword>
<proteinExistence type="evidence at protein level"/>
<protein>
    <recommendedName>
        <fullName evidence="1">GTPase HflX</fullName>
    </recommendedName>
    <alternativeName>
        <fullName evidence="1">GTP-binding protein HflX</fullName>
    </alternativeName>
</protein>
<accession>Q9Z873</accession>
<accession>Q7AIQ8</accession>
<dbReference type="EMBL" id="AE001363">
    <property type="protein sequence ID" value="AAD18618.1"/>
    <property type="molecule type" value="Genomic_DNA"/>
</dbReference>
<dbReference type="EMBL" id="BA000008">
    <property type="protein sequence ID" value="BAA98684.1"/>
    <property type="molecule type" value="Genomic_DNA"/>
</dbReference>
<dbReference type="PIR" id="B72073">
    <property type="entry name" value="B72073"/>
</dbReference>
<dbReference type="PIR" id="B86550">
    <property type="entry name" value="B86550"/>
</dbReference>
<dbReference type="RefSeq" id="NP_224674.1">
    <property type="nucleotide sequence ID" value="NC_000922.1"/>
</dbReference>
<dbReference type="RefSeq" id="WP_010883116.1">
    <property type="nucleotide sequence ID" value="NZ_LN847257.1"/>
</dbReference>
<dbReference type="SMR" id="Q9Z873"/>
<dbReference type="STRING" id="406984.CPK_ORF00993"/>
<dbReference type="KEGG" id="cpj:hflX"/>
<dbReference type="KEGG" id="cpn:CPn_0478"/>
<dbReference type="PATRIC" id="fig|115713.3.peg.535"/>
<dbReference type="eggNOG" id="COG2262">
    <property type="taxonomic scope" value="Bacteria"/>
</dbReference>
<dbReference type="HOGENOM" id="CLU_019597_1_0_0"/>
<dbReference type="OrthoDB" id="9812272at2"/>
<dbReference type="Proteomes" id="UP000000801">
    <property type="component" value="Chromosome"/>
</dbReference>
<dbReference type="GO" id="GO:0005737">
    <property type="term" value="C:cytoplasm"/>
    <property type="evidence" value="ECO:0007669"/>
    <property type="project" value="UniProtKB-SubCell"/>
</dbReference>
<dbReference type="GO" id="GO:0005525">
    <property type="term" value="F:GTP binding"/>
    <property type="evidence" value="ECO:0007669"/>
    <property type="project" value="UniProtKB-UniRule"/>
</dbReference>
<dbReference type="GO" id="GO:0003924">
    <property type="term" value="F:GTPase activity"/>
    <property type="evidence" value="ECO:0007669"/>
    <property type="project" value="UniProtKB-UniRule"/>
</dbReference>
<dbReference type="GO" id="GO:0046872">
    <property type="term" value="F:metal ion binding"/>
    <property type="evidence" value="ECO:0007669"/>
    <property type="project" value="UniProtKB-KW"/>
</dbReference>
<dbReference type="GO" id="GO:0043022">
    <property type="term" value="F:ribosome binding"/>
    <property type="evidence" value="ECO:0007669"/>
    <property type="project" value="TreeGrafter"/>
</dbReference>
<dbReference type="CDD" id="cd01878">
    <property type="entry name" value="HflX"/>
    <property type="match status" value="1"/>
</dbReference>
<dbReference type="FunFam" id="3.40.50.11060:FF:000001">
    <property type="entry name" value="GTPase HflX"/>
    <property type="match status" value="1"/>
</dbReference>
<dbReference type="Gene3D" id="6.10.250.2860">
    <property type="match status" value="1"/>
</dbReference>
<dbReference type="Gene3D" id="3.40.50.11060">
    <property type="entry name" value="GTPase HflX, N-terminal domain"/>
    <property type="match status" value="1"/>
</dbReference>
<dbReference type="Gene3D" id="3.40.50.300">
    <property type="entry name" value="P-loop containing nucleotide triphosphate hydrolases"/>
    <property type="match status" value="1"/>
</dbReference>
<dbReference type="HAMAP" id="MF_00900">
    <property type="entry name" value="GTPase_HflX"/>
    <property type="match status" value="1"/>
</dbReference>
<dbReference type="InterPro" id="IPR030394">
    <property type="entry name" value="G_HFLX_dom"/>
</dbReference>
<dbReference type="InterPro" id="IPR006073">
    <property type="entry name" value="GTP-bd"/>
</dbReference>
<dbReference type="InterPro" id="IPR032305">
    <property type="entry name" value="GTP-bd_M"/>
</dbReference>
<dbReference type="InterPro" id="IPR016496">
    <property type="entry name" value="GTPase_HflX"/>
</dbReference>
<dbReference type="InterPro" id="IPR025121">
    <property type="entry name" value="GTPase_HflX_N"/>
</dbReference>
<dbReference type="InterPro" id="IPR042108">
    <property type="entry name" value="GTPase_HflX_N_sf"/>
</dbReference>
<dbReference type="InterPro" id="IPR027417">
    <property type="entry name" value="P-loop_NTPase"/>
</dbReference>
<dbReference type="NCBIfam" id="TIGR03156">
    <property type="entry name" value="GTP_HflX"/>
    <property type="match status" value="1"/>
</dbReference>
<dbReference type="PANTHER" id="PTHR10229:SF0">
    <property type="entry name" value="GTP-BINDING PROTEIN 6-RELATED"/>
    <property type="match status" value="1"/>
</dbReference>
<dbReference type="PANTHER" id="PTHR10229">
    <property type="entry name" value="GTP-BINDING PROTEIN HFLX"/>
    <property type="match status" value="1"/>
</dbReference>
<dbReference type="Pfam" id="PF16360">
    <property type="entry name" value="GTP-bdg_M"/>
    <property type="match status" value="1"/>
</dbReference>
<dbReference type="Pfam" id="PF13167">
    <property type="entry name" value="GTP-bdg_N"/>
    <property type="match status" value="1"/>
</dbReference>
<dbReference type="Pfam" id="PF01926">
    <property type="entry name" value="MMR_HSR1"/>
    <property type="match status" value="1"/>
</dbReference>
<dbReference type="PIRSF" id="PIRSF006809">
    <property type="entry name" value="GTP-binding_hflX_prd"/>
    <property type="match status" value="1"/>
</dbReference>
<dbReference type="PRINTS" id="PR00326">
    <property type="entry name" value="GTP1OBG"/>
</dbReference>
<dbReference type="SUPFAM" id="SSF52540">
    <property type="entry name" value="P-loop containing nucleoside triphosphate hydrolases"/>
    <property type="match status" value="1"/>
</dbReference>
<dbReference type="PROSITE" id="PS51705">
    <property type="entry name" value="G_HFLX"/>
    <property type="match status" value="1"/>
</dbReference>
<feature type="chain" id="PRO_0000412527" description="GTPase HflX">
    <location>
        <begin position="1"/>
        <end position="472"/>
    </location>
</feature>
<feature type="domain" description="Hflx-type G" evidence="1">
    <location>
        <begin position="230"/>
        <end position="396"/>
    </location>
</feature>
<feature type="region of interest" description="Disordered" evidence="2">
    <location>
        <begin position="1"/>
        <end position="21"/>
    </location>
</feature>
<feature type="binding site" evidence="1">
    <location>
        <begin position="236"/>
        <end position="243"/>
    </location>
    <ligand>
        <name>GTP</name>
        <dbReference type="ChEBI" id="CHEBI:37565"/>
    </ligand>
</feature>
<feature type="binding site" evidence="1">
    <location>
        <position position="243"/>
    </location>
    <ligand>
        <name>Mg(2+)</name>
        <dbReference type="ChEBI" id="CHEBI:18420"/>
    </ligand>
</feature>
<feature type="binding site" evidence="1">
    <location>
        <begin position="261"/>
        <end position="265"/>
    </location>
    <ligand>
        <name>GTP</name>
        <dbReference type="ChEBI" id="CHEBI:37565"/>
    </ligand>
</feature>
<feature type="binding site" evidence="1">
    <location>
        <position position="263"/>
    </location>
    <ligand>
        <name>Mg(2+)</name>
        <dbReference type="ChEBI" id="CHEBI:18420"/>
    </ligand>
</feature>
<feature type="binding site" evidence="1">
    <location>
        <begin position="283"/>
        <end position="286"/>
    </location>
    <ligand>
        <name>GTP</name>
        <dbReference type="ChEBI" id="CHEBI:37565"/>
    </ligand>
</feature>
<feature type="binding site" evidence="1">
    <location>
        <begin position="349"/>
        <end position="352"/>
    </location>
    <ligand>
        <name>GTP</name>
        <dbReference type="ChEBI" id="CHEBI:37565"/>
    </ligand>
</feature>
<feature type="binding site" evidence="1">
    <location>
        <begin position="374"/>
        <end position="376"/>
    </location>
    <ligand>
        <name>GTP</name>
        <dbReference type="ChEBI" id="CHEBI:37565"/>
    </ligand>
</feature>
<feature type="mutagenesis site" description="Loss of activity." evidence="3">
    <original>S</original>
    <variation>N</variation>
    <location>
        <position position="243"/>
    </location>
</feature>
<feature type="mutagenesis site" description="Loss of activity." evidence="3">
    <original>T</original>
    <variation>A</variation>
    <location>
        <position position="263"/>
    </location>
</feature>
<feature type="mutagenesis site" description="Loss of activity." evidence="3">
    <original>N</original>
    <variation>Y</variation>
    <location>
        <position position="349"/>
    </location>
</feature>
<sequence length="472" mass="52763">MDTIDTPGEQGSQSFGNSLGARFDLPRKEQDPSQALAVASYQNKTDSQVVEEHLDELISLADSCGISVLETRSWILKTPSASTYINVGKLEEIEEILKEFPSIGTLIIDEEITPSQQRNLEKRLGLVVLDRTELILEIFSSRALTAEANIQVQLAQARYLLPRLKRLWGHLSRQKSGGGSGGFVKGEGEKQIELDRRMVRERIHKLSAQLKAVIKQRAERRKVKSRRGIPTFALIGYTNSGKSTLLNLLTAADTYVEDKLFATLDPKTRKCVLPGGRHVLLTDTVGFIRKLPHTLVAAFKSTLEAAFHEDVLLHVVDASHPLALEHVQTTYDLFQELKIEKPRIITVLNKVDRLPQGSIPMKLRLLSPLPVLISAKTGEGIQNLLSLMTEIIQEKSLHVTLNFPYTEYGKFTELCDAGVVASSRYQEDFLVVEAYLPKELQKKFRPFISYVFPEDCGDDEGRGPVLESSFGD</sequence>
<comment type="function">
    <text evidence="1 3">GTPase that associates with the 50S ribosomal subunit and may have a role during protein synthesis or ribosome biogenesis. Specific for GTP.</text>
</comment>
<comment type="cofactor">
    <cofactor evidence="1">
        <name>Mg(2+)</name>
        <dbReference type="ChEBI" id="CHEBI:18420"/>
    </cofactor>
</comment>
<comment type="subunit">
    <text evidence="1">Monomer. Associates with the 50S ribosomal subunit.</text>
</comment>
<comment type="subcellular location">
    <subcellularLocation>
        <location evidence="1 3">Cytoplasm</location>
    </subcellularLocation>
    <text>May associate with membranes.</text>
</comment>
<comment type="domain">
    <text evidence="3">Full-length protein is required for specific association with the 50S ribosomal subunit.</text>
</comment>
<comment type="similarity">
    <text evidence="1">Belongs to the TRAFAC class OBG-HflX-like GTPase superfamily. HflX GTPase family.</text>
</comment>
<reference key="1">
    <citation type="journal article" date="1999" name="Nat. Genet.">
        <title>Comparative genomes of Chlamydia pneumoniae and C. trachomatis.</title>
        <authorList>
            <person name="Kalman S."/>
            <person name="Mitchell W.P."/>
            <person name="Marathe R."/>
            <person name="Lammel C.J."/>
            <person name="Fan J."/>
            <person name="Hyman R.W."/>
            <person name="Olinger L."/>
            <person name="Grimwood J."/>
            <person name="Davis R.W."/>
            <person name="Stephens R.S."/>
        </authorList>
    </citation>
    <scope>NUCLEOTIDE SEQUENCE [LARGE SCALE GENOMIC DNA]</scope>
    <source>
        <strain>CWL029</strain>
    </source>
</reference>
<reference key="2">
    <citation type="journal article" date="2000" name="Nucleic Acids Res.">
        <title>Comparison of whole genome sequences of Chlamydia pneumoniae J138 from Japan and CWL029 from USA.</title>
        <authorList>
            <person name="Shirai M."/>
            <person name="Hirakawa H."/>
            <person name="Kimoto M."/>
            <person name="Tabuchi M."/>
            <person name="Kishi F."/>
            <person name="Ouchi K."/>
            <person name="Shiba T."/>
            <person name="Ishii K."/>
            <person name="Hattori M."/>
            <person name="Kuhara S."/>
            <person name="Nakazawa T."/>
        </authorList>
    </citation>
    <scope>NUCLEOTIDE SEQUENCE [LARGE SCALE GENOMIC DNA]</scope>
    <source>
        <strain>J138</strain>
    </source>
</reference>
<reference key="3">
    <citation type="journal article" date="2008" name="Microbiology">
        <title>Chlamydophila pneumoniae HflX belongs to an uncharacterized family of conserved GTPases and associates with the Escherichia coli 50S large ribosomal subunit.</title>
        <authorList>
            <person name="Polkinghorne A."/>
            <person name="Ziegler U."/>
            <person name="Gonzalez-Hernandez Y."/>
            <person name="Pospischil A."/>
            <person name="Timms P."/>
            <person name="Vaughan L."/>
        </authorList>
    </citation>
    <scope>FUNCTION</scope>
    <scope>INTERACTION WITH 50S SUBUNIT</scope>
    <scope>SUBCELLULAR LOCATION</scope>
    <scope>DOMAIN</scope>
    <scope>MUTAGENESIS OF SER-243; THR-263 AND ASN-349</scope>
    <source>
        <strain>CWL029</strain>
    </source>
</reference>
<evidence type="ECO:0000255" key="1">
    <source>
        <dbReference type="HAMAP-Rule" id="MF_00900"/>
    </source>
</evidence>
<evidence type="ECO:0000256" key="2">
    <source>
        <dbReference type="SAM" id="MobiDB-lite"/>
    </source>
</evidence>
<evidence type="ECO:0000269" key="3">
    <source>
    </source>
</evidence>
<name>HFLX_CHLPN</name>
<gene>
    <name evidence="1" type="primary">hflX</name>
    <name type="ordered locus">CPn_0478</name>
    <name type="ordered locus">CPj0478</name>
</gene>
<organism>
    <name type="scientific">Chlamydia pneumoniae</name>
    <name type="common">Chlamydophila pneumoniae</name>
    <dbReference type="NCBI Taxonomy" id="83558"/>
    <lineage>
        <taxon>Bacteria</taxon>
        <taxon>Pseudomonadati</taxon>
        <taxon>Chlamydiota</taxon>
        <taxon>Chlamydiia</taxon>
        <taxon>Chlamydiales</taxon>
        <taxon>Chlamydiaceae</taxon>
        <taxon>Chlamydia/Chlamydophila group</taxon>
        <taxon>Chlamydia</taxon>
    </lineage>
</organism>